<name>LIH1_YEAST</name>
<reference key="1">
    <citation type="journal article" date="1996" name="EMBO J.">
        <title>Complete nucleotide sequence of Saccharomyces cerevisiae chromosome X.</title>
        <authorList>
            <person name="Galibert F."/>
            <person name="Alexandraki D."/>
            <person name="Baur A."/>
            <person name="Boles E."/>
            <person name="Chalwatzis N."/>
            <person name="Chuat J.-C."/>
            <person name="Coster F."/>
            <person name="Cziepluch C."/>
            <person name="de Haan M."/>
            <person name="Domdey H."/>
            <person name="Durand P."/>
            <person name="Entian K.-D."/>
            <person name="Gatius M."/>
            <person name="Goffeau A."/>
            <person name="Grivell L.A."/>
            <person name="Hennemann A."/>
            <person name="Herbert C.J."/>
            <person name="Heumann K."/>
            <person name="Hilger F."/>
            <person name="Hollenberg C.P."/>
            <person name="Huang M.-E."/>
            <person name="Jacq C."/>
            <person name="Jauniaux J.-C."/>
            <person name="Katsoulou C."/>
            <person name="Kirchrath L."/>
            <person name="Kleine K."/>
            <person name="Kordes E."/>
            <person name="Koetter P."/>
            <person name="Liebl S."/>
            <person name="Louis E.J."/>
            <person name="Manus V."/>
            <person name="Mewes H.-W."/>
            <person name="Miosga T."/>
            <person name="Obermaier B."/>
            <person name="Perea J."/>
            <person name="Pohl T.M."/>
            <person name="Portetelle D."/>
            <person name="Pujol A."/>
            <person name="Purnelle B."/>
            <person name="Ramezani Rad M."/>
            <person name="Rasmussen S.W."/>
            <person name="Rose M."/>
            <person name="Rossau R."/>
            <person name="Schaaff-Gerstenschlaeger I."/>
            <person name="Smits P.H.M."/>
            <person name="Scarcez T."/>
            <person name="Soriano N."/>
            <person name="To Van D."/>
            <person name="Tzermia M."/>
            <person name="Van Broekhoven A."/>
            <person name="Vandenbol M."/>
            <person name="Wedler H."/>
            <person name="von Wettstein D."/>
            <person name="Wambutt R."/>
            <person name="Zagulski M."/>
            <person name="Zollner A."/>
            <person name="Karpfinger-Hartl L."/>
        </authorList>
    </citation>
    <scope>NUCLEOTIDE SEQUENCE [LARGE SCALE GENOMIC DNA]</scope>
    <source>
        <strain>ATCC 204508 / S288c</strain>
    </source>
</reference>
<reference key="2">
    <citation type="journal article" date="2014" name="G3 (Bethesda)">
        <title>The reference genome sequence of Saccharomyces cerevisiae: Then and now.</title>
        <authorList>
            <person name="Engel S.R."/>
            <person name="Dietrich F.S."/>
            <person name="Fisk D.G."/>
            <person name="Binkley G."/>
            <person name="Balakrishnan R."/>
            <person name="Costanzo M.C."/>
            <person name="Dwight S.S."/>
            <person name="Hitz B.C."/>
            <person name="Karra K."/>
            <person name="Nash R.S."/>
            <person name="Weng S."/>
            <person name="Wong E.D."/>
            <person name="Lloyd P."/>
            <person name="Skrzypek M.S."/>
            <person name="Miyasato S.R."/>
            <person name="Simison M."/>
            <person name="Cherry J.M."/>
        </authorList>
    </citation>
    <scope>GENOME REANNOTATION</scope>
    <scope>SEQUENCE REVISION TO 14 AND 66</scope>
    <source>
        <strain>ATCC 204508 / S288c</strain>
    </source>
</reference>
<reference key="3">
    <citation type="journal article" date="2015" name="PLoS ONE">
        <title>Comprehensive analysis of a yeast lipase family in the Yarrowia clade.</title>
        <authorList>
            <person name="Meunchan M."/>
            <person name="Michely S."/>
            <person name="Devillers H."/>
            <person name="Nicaud J.M."/>
            <person name="Marty A."/>
            <person name="Neuveglise C."/>
        </authorList>
    </citation>
    <scope>CATALYTIC ACTIVITY</scope>
    <scope>FUNCTION</scope>
</reference>
<sequence>MPVVHCSSNLPITPYIYERLVYFIKASSISSCISDNLLLVNKTFNDGGCPPHINFCNDEIINPTAGQTVVELVLNAKKGELGSGYLAVDHGKKVVILAFRGSTTRQDWFSDFEIYPVNYSPLCVKEYRKLIEEGKIRECEGCKMHRGFLRFTETLGMDVFKKMESILESFPEYRIVVTGHSLGAALASLAGIELKIRGFDPLVLTFATPKIFNSEMKQWVDELFETDAIEKESILKDEIQFRKGYFRVVHTGDYIPMVPPFYHPAGLEMFINKVGLPQNAEDIEYRGKNNRLTLKDGFREGMSGLVEDWLHVYEHRAYFIDVVGCSGL</sequence>
<organism>
    <name type="scientific">Saccharomyces cerevisiae (strain ATCC 204508 / S288c)</name>
    <name type="common">Baker's yeast</name>
    <dbReference type="NCBI Taxonomy" id="559292"/>
    <lineage>
        <taxon>Eukaryota</taxon>
        <taxon>Fungi</taxon>
        <taxon>Dikarya</taxon>
        <taxon>Ascomycota</taxon>
        <taxon>Saccharomycotina</taxon>
        <taxon>Saccharomycetes</taxon>
        <taxon>Saccharomycetales</taxon>
        <taxon>Saccharomycetaceae</taxon>
        <taxon>Saccharomyces</taxon>
    </lineage>
</organism>
<keyword id="KW-0378">Hydrolase</keyword>
<keyword id="KW-0442">Lipid degradation</keyword>
<keyword id="KW-0443">Lipid metabolism</keyword>
<keyword id="KW-1185">Reference proteome</keyword>
<proteinExistence type="evidence at protein level"/>
<accession>P47145</accession>
<accession>D6VWS6</accession>
<evidence type="ECO:0000250" key="1">
    <source>
        <dbReference type="UniProtKB" id="O59952"/>
    </source>
</evidence>
<evidence type="ECO:0000303" key="2">
    <source>
    </source>
</evidence>
<evidence type="ECO:0000305" key="3"/>
<evidence type="ECO:0000305" key="4">
    <source>
    </source>
</evidence>
<protein>
    <recommendedName>
        <fullName evidence="2">Putative lipase LIH1</fullName>
        <ecNumber evidence="4">3.1.1.3</ecNumber>
    </recommendedName>
    <alternativeName>
        <fullName evidence="2">Lipase homolog 1</fullName>
    </alternativeName>
</protein>
<gene>
    <name evidence="2" type="primary">LIH1</name>
    <name type="ordered locus">YJR107W</name>
    <name type="ORF">J1983</name>
</gene>
<dbReference type="EC" id="3.1.1.3" evidence="4"/>
<dbReference type="EMBL" id="Z49607">
    <property type="protein sequence ID" value="CAA89637.1"/>
    <property type="molecule type" value="Genomic_DNA"/>
</dbReference>
<dbReference type="EMBL" id="BK006943">
    <property type="protein sequence ID" value="DAA08892.2"/>
    <property type="molecule type" value="Genomic_DNA"/>
</dbReference>
<dbReference type="PIR" id="S57128">
    <property type="entry name" value="S57128"/>
</dbReference>
<dbReference type="RefSeq" id="NP_012641.2">
    <property type="nucleotide sequence ID" value="NM_001181765.2"/>
</dbReference>
<dbReference type="SMR" id="P47145"/>
<dbReference type="BioGRID" id="33863">
    <property type="interactions" value="74"/>
</dbReference>
<dbReference type="FunCoup" id="P47145">
    <property type="interactions" value="28"/>
</dbReference>
<dbReference type="STRING" id="4932.YJR107W"/>
<dbReference type="ESTHER" id="yeast-yj77">
    <property type="family name" value="Lipase_3"/>
</dbReference>
<dbReference type="PaxDb" id="4932-YJR107W"/>
<dbReference type="PeptideAtlas" id="P47145"/>
<dbReference type="EnsemblFungi" id="YJR107W_mRNA">
    <property type="protein sequence ID" value="YJR107W"/>
    <property type="gene ID" value="YJR107W"/>
</dbReference>
<dbReference type="GeneID" id="853571"/>
<dbReference type="KEGG" id="sce:YJR107W"/>
<dbReference type="AGR" id="SGD:S000003868"/>
<dbReference type="SGD" id="S000003868">
    <property type="gene designation" value="LIH1"/>
</dbReference>
<dbReference type="VEuPathDB" id="FungiDB:YJR107W"/>
<dbReference type="eggNOG" id="KOG4569">
    <property type="taxonomic scope" value="Eukaryota"/>
</dbReference>
<dbReference type="GeneTree" id="ENSGT00940000171519"/>
<dbReference type="HOGENOM" id="CLU_032957_3_0_1"/>
<dbReference type="InParanoid" id="P47145"/>
<dbReference type="OMA" id="YEHRAYF"/>
<dbReference type="OrthoDB" id="406844at2759"/>
<dbReference type="BioGRID-ORCS" id="853571">
    <property type="hits" value="0 hits in 10 CRISPR screens"/>
</dbReference>
<dbReference type="PRO" id="PR:P47145"/>
<dbReference type="Proteomes" id="UP000002311">
    <property type="component" value="Chromosome X"/>
</dbReference>
<dbReference type="RNAct" id="P47145">
    <property type="molecule type" value="protein"/>
</dbReference>
<dbReference type="GO" id="GO:0004806">
    <property type="term" value="F:triacylglycerol lipase activity"/>
    <property type="evidence" value="ECO:0007669"/>
    <property type="project" value="UniProtKB-EC"/>
</dbReference>
<dbReference type="GO" id="GO:0016042">
    <property type="term" value="P:lipid catabolic process"/>
    <property type="evidence" value="ECO:0007669"/>
    <property type="project" value="UniProtKB-KW"/>
</dbReference>
<dbReference type="CDD" id="cd00519">
    <property type="entry name" value="Lipase_3"/>
    <property type="match status" value="1"/>
</dbReference>
<dbReference type="FunFam" id="3.40.50.1820:FF:000381">
    <property type="entry name" value="YJR107W-like protein"/>
    <property type="match status" value="1"/>
</dbReference>
<dbReference type="Gene3D" id="3.40.50.1820">
    <property type="entry name" value="alpha/beta hydrolase"/>
    <property type="match status" value="1"/>
</dbReference>
<dbReference type="InterPro" id="IPR029058">
    <property type="entry name" value="AB_hydrolase_fold"/>
</dbReference>
<dbReference type="InterPro" id="IPR051299">
    <property type="entry name" value="AB_hydrolase_lip/est"/>
</dbReference>
<dbReference type="InterPro" id="IPR002921">
    <property type="entry name" value="Fungal_lipase-type"/>
</dbReference>
<dbReference type="PANTHER" id="PTHR46640:SF3">
    <property type="entry name" value="LIPASE LIH1-RELATED"/>
    <property type="match status" value="1"/>
</dbReference>
<dbReference type="PANTHER" id="PTHR46640">
    <property type="entry name" value="TRIACYLGLYCEROL LIPASE, PUTATIVE (AFU_ORTHOLOGUE AFUA_6G06510)-RELATED"/>
    <property type="match status" value="1"/>
</dbReference>
<dbReference type="Pfam" id="PF01764">
    <property type="entry name" value="Lipase_3"/>
    <property type="match status" value="1"/>
</dbReference>
<dbReference type="SUPFAM" id="SSF53474">
    <property type="entry name" value="alpha/beta-Hydrolases"/>
    <property type="match status" value="1"/>
</dbReference>
<dbReference type="PROSITE" id="PS00120">
    <property type="entry name" value="LIPASE_SER"/>
    <property type="match status" value="1"/>
</dbReference>
<feature type="chain" id="PRO_0000090374" description="Putative lipase LIH1">
    <location>
        <begin position="1"/>
        <end position="328"/>
    </location>
</feature>
<feature type="active site" description="Nucleophile" evidence="1">
    <location>
        <position position="181"/>
    </location>
</feature>
<feature type="active site" description="Charge relay system" evidence="1">
    <location>
        <position position="253"/>
    </location>
</feature>
<feature type="active site" description="Charge relay system" evidence="1">
    <location>
        <position position="315"/>
    </location>
</feature>
<feature type="sequence conflict" description="In Ref. 1; CAA89637." evidence="3" ref="1">
    <original>P</original>
    <variation>L</variation>
    <location>
        <position position="14"/>
    </location>
</feature>
<feature type="sequence conflict" description="In Ref. 1; CAA89637." evidence="3" ref="1">
    <original>G</original>
    <variation>P</variation>
    <location>
        <position position="66"/>
    </location>
</feature>
<comment type="function">
    <text evidence="4">Lipases catalyze the hydrolysis of the ester bond of tri-, di- and monoglycerides of long-chain fatty acids into fatty acids and glycerol.</text>
</comment>
<comment type="catalytic activity">
    <reaction evidence="4">
        <text>a triacylglycerol + H2O = a diacylglycerol + a fatty acid + H(+)</text>
        <dbReference type="Rhea" id="RHEA:12044"/>
        <dbReference type="ChEBI" id="CHEBI:15377"/>
        <dbReference type="ChEBI" id="CHEBI:15378"/>
        <dbReference type="ChEBI" id="CHEBI:17855"/>
        <dbReference type="ChEBI" id="CHEBI:18035"/>
        <dbReference type="ChEBI" id="CHEBI:28868"/>
        <dbReference type="EC" id="3.1.1.3"/>
    </reaction>
    <physiologicalReaction direction="left-to-right" evidence="4">
        <dbReference type="Rhea" id="RHEA:12045"/>
    </physiologicalReaction>
</comment>
<comment type="similarity">
    <text evidence="3">Belongs to the AB hydrolase superfamily. Lipase family.</text>
</comment>